<sequence>MTIFELSKEGRKAYNLPKNNIKDYGFDFPNHLMRGKEPRLPQVSELDIVRHYTNLAAKNYAVDVGFYPLGSCTMKYNPKINEKLASLEGFTMIHPCQPREVTQGALQLMYELKEMLCEISGMDDMTLIPSAGAHGELTGMLIARAYHLSRGDTKRKKAIVPDSAHGTNPASAMMAGFEVVELKSGKDGRIDLEELEKHLDDEVAVLLLTNPNTLGLFEKDIIKIAETVHKHGALLYYDGANLNAILGRTRPGDMGFDIVHLNLHKTFSTPHGMGGPGSGPVGVKKHLAKFLPIPEIIKESDVYKFNYNKSESIGFIRSFYGNFSVLVRAYVYIKTMGNDGLKKVGQMAVLNANYLRKKVSKIMDIAYPDMCMHEFVATCEKLTKETGVKALDIAKRLLDYGIHAPTMYFPLIVHEDFMIEPTETESKDTLDEFTKILEKIFIEAKENPELVKNAPYTTPVRRLDEASASRKPIVKYNFEEE</sequence>
<proteinExistence type="inferred from homology"/>
<accession>A6LP69</accession>
<reference key="1">
    <citation type="submission" date="2007-05" db="EMBL/GenBank/DDBJ databases">
        <title>Complete sequence of Thermosipho melanesiensis BI429.</title>
        <authorList>
            <consortium name="US DOE Joint Genome Institute"/>
            <person name="Copeland A."/>
            <person name="Lucas S."/>
            <person name="Lapidus A."/>
            <person name="Barry K."/>
            <person name="Glavina del Rio T."/>
            <person name="Dalin E."/>
            <person name="Tice H."/>
            <person name="Pitluck S."/>
            <person name="Chertkov O."/>
            <person name="Brettin T."/>
            <person name="Bruce D."/>
            <person name="Detter J.C."/>
            <person name="Han C."/>
            <person name="Schmutz J."/>
            <person name="Larimer F."/>
            <person name="Land M."/>
            <person name="Hauser L."/>
            <person name="Kyrpides N."/>
            <person name="Mikhailova N."/>
            <person name="Nelson K."/>
            <person name="Gogarten J.P."/>
            <person name="Noll K."/>
            <person name="Richardson P."/>
        </authorList>
    </citation>
    <scope>NUCLEOTIDE SEQUENCE [LARGE SCALE GENOMIC DNA]</scope>
    <source>
        <strain>DSM 12029 / CIP 104789 / BI429</strain>
    </source>
</reference>
<comment type="function">
    <text evidence="1">The glycine cleavage system catalyzes the degradation of glycine. The P protein binds the alpha-amino group of glycine through its pyridoxal phosphate cofactor; CO(2) is released and the remaining methylamine moiety is then transferred to the lipoamide cofactor of the H protein.</text>
</comment>
<comment type="catalytic activity">
    <reaction evidence="1">
        <text>N(6)-[(R)-lipoyl]-L-lysyl-[glycine-cleavage complex H protein] + glycine + H(+) = N(6)-[(R)-S(8)-aminomethyldihydrolipoyl]-L-lysyl-[glycine-cleavage complex H protein] + CO2</text>
        <dbReference type="Rhea" id="RHEA:24304"/>
        <dbReference type="Rhea" id="RHEA-COMP:10494"/>
        <dbReference type="Rhea" id="RHEA-COMP:10495"/>
        <dbReference type="ChEBI" id="CHEBI:15378"/>
        <dbReference type="ChEBI" id="CHEBI:16526"/>
        <dbReference type="ChEBI" id="CHEBI:57305"/>
        <dbReference type="ChEBI" id="CHEBI:83099"/>
        <dbReference type="ChEBI" id="CHEBI:83143"/>
        <dbReference type="EC" id="1.4.4.2"/>
    </reaction>
</comment>
<comment type="cofactor">
    <cofactor evidence="1">
        <name>pyridoxal 5'-phosphate</name>
        <dbReference type="ChEBI" id="CHEBI:597326"/>
    </cofactor>
</comment>
<comment type="subunit">
    <text evidence="1">The glycine cleavage system is composed of four proteins: P, T, L and H. In this organism, the P 'protein' is a heterodimer of two subunits.</text>
</comment>
<comment type="similarity">
    <text evidence="1">Belongs to the GcvP family. C-terminal subunit subfamily.</text>
</comment>
<gene>
    <name evidence="1" type="primary">gcvPB</name>
    <name type="ordered locus">Tmel_1887</name>
</gene>
<name>GCSPB_THEM4</name>
<protein>
    <recommendedName>
        <fullName evidence="1">Probable glycine dehydrogenase (decarboxylating) subunit 2</fullName>
        <ecNumber evidence="1">1.4.4.2</ecNumber>
    </recommendedName>
    <alternativeName>
        <fullName evidence="1">Glycine cleavage system P-protein subunit 2</fullName>
    </alternativeName>
    <alternativeName>
        <fullName evidence="1">Glycine decarboxylase subunit 2</fullName>
    </alternativeName>
    <alternativeName>
        <fullName evidence="1">Glycine dehydrogenase (aminomethyl-transferring) subunit 2</fullName>
    </alternativeName>
</protein>
<feature type="chain" id="PRO_1000045707" description="Probable glycine dehydrogenase (decarboxylating) subunit 2">
    <location>
        <begin position="1"/>
        <end position="481"/>
    </location>
</feature>
<feature type="modified residue" description="N6-(pyridoxal phosphate)lysine" evidence="1">
    <location>
        <position position="265"/>
    </location>
</feature>
<evidence type="ECO:0000255" key="1">
    <source>
        <dbReference type="HAMAP-Rule" id="MF_00713"/>
    </source>
</evidence>
<organism>
    <name type="scientific">Thermosipho melanesiensis (strain DSM 12029 / CIP 104789 / BI429)</name>
    <dbReference type="NCBI Taxonomy" id="391009"/>
    <lineage>
        <taxon>Bacteria</taxon>
        <taxon>Thermotogati</taxon>
        <taxon>Thermotogota</taxon>
        <taxon>Thermotogae</taxon>
        <taxon>Thermotogales</taxon>
        <taxon>Fervidobacteriaceae</taxon>
        <taxon>Thermosipho</taxon>
    </lineage>
</organism>
<keyword id="KW-0560">Oxidoreductase</keyword>
<keyword id="KW-0663">Pyridoxal phosphate</keyword>
<dbReference type="EC" id="1.4.4.2" evidence="1"/>
<dbReference type="EMBL" id="CP000716">
    <property type="protein sequence ID" value="ABR31720.1"/>
    <property type="molecule type" value="Genomic_DNA"/>
</dbReference>
<dbReference type="RefSeq" id="WP_012058078.1">
    <property type="nucleotide sequence ID" value="NC_009616.1"/>
</dbReference>
<dbReference type="SMR" id="A6LP69"/>
<dbReference type="STRING" id="391009.Tmel_1887"/>
<dbReference type="KEGG" id="tme:Tmel_1887"/>
<dbReference type="eggNOG" id="COG1003">
    <property type="taxonomic scope" value="Bacteria"/>
</dbReference>
<dbReference type="HOGENOM" id="CLU_004620_5_0_0"/>
<dbReference type="OrthoDB" id="9801272at2"/>
<dbReference type="Proteomes" id="UP000001110">
    <property type="component" value="Chromosome"/>
</dbReference>
<dbReference type="GO" id="GO:0005829">
    <property type="term" value="C:cytosol"/>
    <property type="evidence" value="ECO:0007669"/>
    <property type="project" value="TreeGrafter"/>
</dbReference>
<dbReference type="GO" id="GO:0005960">
    <property type="term" value="C:glycine cleavage complex"/>
    <property type="evidence" value="ECO:0007669"/>
    <property type="project" value="TreeGrafter"/>
</dbReference>
<dbReference type="GO" id="GO:0016594">
    <property type="term" value="F:glycine binding"/>
    <property type="evidence" value="ECO:0007669"/>
    <property type="project" value="TreeGrafter"/>
</dbReference>
<dbReference type="GO" id="GO:0004375">
    <property type="term" value="F:glycine dehydrogenase (decarboxylating) activity"/>
    <property type="evidence" value="ECO:0007669"/>
    <property type="project" value="UniProtKB-EC"/>
</dbReference>
<dbReference type="GO" id="GO:0030170">
    <property type="term" value="F:pyridoxal phosphate binding"/>
    <property type="evidence" value="ECO:0007669"/>
    <property type="project" value="TreeGrafter"/>
</dbReference>
<dbReference type="GO" id="GO:0019464">
    <property type="term" value="P:glycine decarboxylation via glycine cleavage system"/>
    <property type="evidence" value="ECO:0007669"/>
    <property type="project" value="UniProtKB-UniRule"/>
</dbReference>
<dbReference type="CDD" id="cd00613">
    <property type="entry name" value="GDC-P"/>
    <property type="match status" value="1"/>
</dbReference>
<dbReference type="FunFam" id="3.40.640.10:FF:000034">
    <property type="entry name" value="Probable glycine dehydrogenase (decarboxylating) subunit 2"/>
    <property type="match status" value="1"/>
</dbReference>
<dbReference type="FunFam" id="3.90.1150.10:FF:000014">
    <property type="entry name" value="Probable glycine dehydrogenase (decarboxylating) subunit 2"/>
    <property type="match status" value="1"/>
</dbReference>
<dbReference type="Gene3D" id="6.20.440.10">
    <property type="match status" value="1"/>
</dbReference>
<dbReference type="Gene3D" id="3.90.1150.10">
    <property type="entry name" value="Aspartate Aminotransferase, domain 1"/>
    <property type="match status" value="1"/>
</dbReference>
<dbReference type="Gene3D" id="3.40.640.10">
    <property type="entry name" value="Type I PLP-dependent aspartate aminotransferase-like (Major domain)"/>
    <property type="match status" value="1"/>
</dbReference>
<dbReference type="HAMAP" id="MF_00713">
    <property type="entry name" value="GcvPB"/>
    <property type="match status" value="1"/>
</dbReference>
<dbReference type="InterPro" id="IPR023012">
    <property type="entry name" value="GcvPB"/>
</dbReference>
<dbReference type="InterPro" id="IPR049316">
    <property type="entry name" value="GDC-P_C"/>
</dbReference>
<dbReference type="InterPro" id="IPR049315">
    <property type="entry name" value="GDC-P_N"/>
</dbReference>
<dbReference type="InterPro" id="IPR020581">
    <property type="entry name" value="GDC_P"/>
</dbReference>
<dbReference type="InterPro" id="IPR015424">
    <property type="entry name" value="PyrdxlP-dep_Trfase"/>
</dbReference>
<dbReference type="InterPro" id="IPR015421">
    <property type="entry name" value="PyrdxlP-dep_Trfase_major"/>
</dbReference>
<dbReference type="InterPro" id="IPR015422">
    <property type="entry name" value="PyrdxlP-dep_Trfase_small"/>
</dbReference>
<dbReference type="NCBIfam" id="NF003346">
    <property type="entry name" value="PRK04366.1"/>
    <property type="match status" value="1"/>
</dbReference>
<dbReference type="PANTHER" id="PTHR11773:SF1">
    <property type="entry name" value="GLYCINE DEHYDROGENASE (DECARBOXYLATING), MITOCHONDRIAL"/>
    <property type="match status" value="1"/>
</dbReference>
<dbReference type="PANTHER" id="PTHR11773">
    <property type="entry name" value="GLYCINE DEHYDROGENASE, DECARBOXYLATING"/>
    <property type="match status" value="1"/>
</dbReference>
<dbReference type="Pfam" id="PF21478">
    <property type="entry name" value="GcvP2_C"/>
    <property type="match status" value="1"/>
</dbReference>
<dbReference type="Pfam" id="PF02347">
    <property type="entry name" value="GDC-P"/>
    <property type="match status" value="1"/>
</dbReference>
<dbReference type="SUPFAM" id="SSF53383">
    <property type="entry name" value="PLP-dependent transferases"/>
    <property type="match status" value="1"/>
</dbReference>